<organism>
    <name type="scientific">Streptococcus pneumoniae serotype 4 (strain ATCC BAA-334 / TIGR4)</name>
    <dbReference type="NCBI Taxonomy" id="170187"/>
    <lineage>
        <taxon>Bacteria</taxon>
        <taxon>Bacillati</taxon>
        <taxon>Bacillota</taxon>
        <taxon>Bacilli</taxon>
        <taxon>Lactobacillales</taxon>
        <taxon>Streptococcaceae</taxon>
        <taxon>Streptococcus</taxon>
    </lineage>
</organism>
<accession>P66155</accession>
<accession>Q97SE3</accession>
<proteinExistence type="inferred from homology"/>
<sequence>MAKVCYFTGRKTVSGNNRSHAMNQTKRAVKPNLQKVTVLIDGKPKKVWASARALKSGKVERV</sequence>
<name>RL28_STRPN</name>
<protein>
    <recommendedName>
        <fullName evidence="1">Large ribosomal subunit protein bL28</fullName>
    </recommendedName>
    <alternativeName>
        <fullName evidence="2">50S ribosomal protein L28</fullName>
    </alternativeName>
</protein>
<comment type="similarity">
    <text evidence="1">Belongs to the bacterial ribosomal protein bL28 family.</text>
</comment>
<gene>
    <name evidence="1" type="primary">rpmB</name>
    <name type="ordered locus">SP_0441</name>
</gene>
<reference key="1">
    <citation type="journal article" date="2001" name="Science">
        <title>Complete genome sequence of a virulent isolate of Streptococcus pneumoniae.</title>
        <authorList>
            <person name="Tettelin H."/>
            <person name="Nelson K.E."/>
            <person name="Paulsen I.T."/>
            <person name="Eisen J.A."/>
            <person name="Read T.D."/>
            <person name="Peterson S.N."/>
            <person name="Heidelberg J.F."/>
            <person name="DeBoy R.T."/>
            <person name="Haft D.H."/>
            <person name="Dodson R.J."/>
            <person name="Durkin A.S."/>
            <person name="Gwinn M.L."/>
            <person name="Kolonay J.F."/>
            <person name="Nelson W.C."/>
            <person name="Peterson J.D."/>
            <person name="Umayam L.A."/>
            <person name="White O."/>
            <person name="Salzberg S.L."/>
            <person name="Lewis M.R."/>
            <person name="Radune D."/>
            <person name="Holtzapple E.K."/>
            <person name="Khouri H.M."/>
            <person name="Wolf A.M."/>
            <person name="Utterback T.R."/>
            <person name="Hansen C.L."/>
            <person name="McDonald L.A."/>
            <person name="Feldblyum T.V."/>
            <person name="Angiuoli S.V."/>
            <person name="Dickinson T."/>
            <person name="Hickey E.K."/>
            <person name="Holt I.E."/>
            <person name="Loftus B.J."/>
            <person name="Yang F."/>
            <person name="Smith H.O."/>
            <person name="Venter J.C."/>
            <person name="Dougherty B.A."/>
            <person name="Morrison D.A."/>
            <person name="Hollingshead S.K."/>
            <person name="Fraser C.M."/>
        </authorList>
    </citation>
    <scope>NUCLEOTIDE SEQUENCE [LARGE SCALE GENOMIC DNA]</scope>
    <source>
        <strain>ATCC BAA-334 / TIGR4</strain>
    </source>
</reference>
<keyword id="KW-1185">Reference proteome</keyword>
<keyword id="KW-0687">Ribonucleoprotein</keyword>
<keyword id="KW-0689">Ribosomal protein</keyword>
<feature type="chain" id="PRO_0000178563" description="Large ribosomal subunit protein bL28">
    <location>
        <begin position="1"/>
        <end position="62"/>
    </location>
</feature>
<evidence type="ECO:0000255" key="1">
    <source>
        <dbReference type="HAMAP-Rule" id="MF_00373"/>
    </source>
</evidence>
<evidence type="ECO:0000305" key="2"/>
<dbReference type="EMBL" id="AE005672">
    <property type="protein sequence ID" value="AAK74602.1"/>
    <property type="molecule type" value="Genomic_DNA"/>
</dbReference>
<dbReference type="PIR" id="A95051">
    <property type="entry name" value="A95051"/>
</dbReference>
<dbReference type="RefSeq" id="WP_001140948.1">
    <property type="nucleotide sequence ID" value="NZ_CP155539.1"/>
</dbReference>
<dbReference type="SMR" id="P66155"/>
<dbReference type="PaxDb" id="170187-SP_0441"/>
<dbReference type="EnsemblBacteria" id="AAK74602">
    <property type="protein sequence ID" value="AAK74602"/>
    <property type="gene ID" value="SP_0441"/>
</dbReference>
<dbReference type="GeneID" id="93921138"/>
<dbReference type="KEGG" id="spn:SP_0441"/>
<dbReference type="eggNOG" id="COG0227">
    <property type="taxonomic scope" value="Bacteria"/>
</dbReference>
<dbReference type="PhylomeDB" id="P66155"/>
<dbReference type="BioCyc" id="SPNE170187:G1FZB-457-MONOMER"/>
<dbReference type="Proteomes" id="UP000000585">
    <property type="component" value="Chromosome"/>
</dbReference>
<dbReference type="GO" id="GO:1990904">
    <property type="term" value="C:ribonucleoprotein complex"/>
    <property type="evidence" value="ECO:0007669"/>
    <property type="project" value="UniProtKB-KW"/>
</dbReference>
<dbReference type="GO" id="GO:0005840">
    <property type="term" value="C:ribosome"/>
    <property type="evidence" value="ECO:0007669"/>
    <property type="project" value="UniProtKB-KW"/>
</dbReference>
<dbReference type="GO" id="GO:0003735">
    <property type="term" value="F:structural constituent of ribosome"/>
    <property type="evidence" value="ECO:0007669"/>
    <property type="project" value="InterPro"/>
</dbReference>
<dbReference type="GO" id="GO:0006412">
    <property type="term" value="P:translation"/>
    <property type="evidence" value="ECO:0007669"/>
    <property type="project" value="UniProtKB-UniRule"/>
</dbReference>
<dbReference type="Gene3D" id="2.30.170.40">
    <property type="entry name" value="Ribosomal protein L28/L24"/>
    <property type="match status" value="1"/>
</dbReference>
<dbReference type="HAMAP" id="MF_00373">
    <property type="entry name" value="Ribosomal_bL28"/>
    <property type="match status" value="1"/>
</dbReference>
<dbReference type="InterPro" id="IPR050096">
    <property type="entry name" value="Bacterial_rp_bL28"/>
</dbReference>
<dbReference type="InterPro" id="IPR026569">
    <property type="entry name" value="Ribosomal_bL28"/>
</dbReference>
<dbReference type="InterPro" id="IPR034704">
    <property type="entry name" value="Ribosomal_bL28/bL31-like_sf"/>
</dbReference>
<dbReference type="InterPro" id="IPR001383">
    <property type="entry name" value="Ribosomal_bL28_bact-type"/>
</dbReference>
<dbReference type="InterPro" id="IPR037147">
    <property type="entry name" value="Ribosomal_bL28_sf"/>
</dbReference>
<dbReference type="NCBIfam" id="TIGR00009">
    <property type="entry name" value="L28"/>
    <property type="match status" value="1"/>
</dbReference>
<dbReference type="PANTHER" id="PTHR39080">
    <property type="entry name" value="50S RIBOSOMAL PROTEIN L28"/>
    <property type="match status" value="1"/>
</dbReference>
<dbReference type="PANTHER" id="PTHR39080:SF1">
    <property type="entry name" value="LARGE RIBOSOMAL SUBUNIT PROTEIN BL28A"/>
    <property type="match status" value="1"/>
</dbReference>
<dbReference type="Pfam" id="PF00830">
    <property type="entry name" value="Ribosomal_L28"/>
    <property type="match status" value="1"/>
</dbReference>
<dbReference type="SUPFAM" id="SSF143800">
    <property type="entry name" value="L28p-like"/>
    <property type="match status" value="1"/>
</dbReference>